<dbReference type="PIR" id="A02339">
    <property type="entry name" value="HASNV"/>
</dbReference>
<dbReference type="SMR" id="P02010"/>
<dbReference type="GO" id="GO:0072562">
    <property type="term" value="C:blood microparticle"/>
    <property type="evidence" value="ECO:0007669"/>
    <property type="project" value="TreeGrafter"/>
</dbReference>
<dbReference type="GO" id="GO:0031838">
    <property type="term" value="C:haptoglobin-hemoglobin complex"/>
    <property type="evidence" value="ECO:0007669"/>
    <property type="project" value="TreeGrafter"/>
</dbReference>
<dbReference type="GO" id="GO:0005833">
    <property type="term" value="C:hemoglobin complex"/>
    <property type="evidence" value="ECO:0007669"/>
    <property type="project" value="InterPro"/>
</dbReference>
<dbReference type="GO" id="GO:0031720">
    <property type="term" value="F:haptoglobin binding"/>
    <property type="evidence" value="ECO:0007669"/>
    <property type="project" value="TreeGrafter"/>
</dbReference>
<dbReference type="GO" id="GO:0020037">
    <property type="term" value="F:heme binding"/>
    <property type="evidence" value="ECO:0007669"/>
    <property type="project" value="InterPro"/>
</dbReference>
<dbReference type="GO" id="GO:0046872">
    <property type="term" value="F:metal ion binding"/>
    <property type="evidence" value="ECO:0007669"/>
    <property type="project" value="UniProtKB-KW"/>
</dbReference>
<dbReference type="GO" id="GO:0043177">
    <property type="term" value="F:organic acid binding"/>
    <property type="evidence" value="ECO:0007669"/>
    <property type="project" value="TreeGrafter"/>
</dbReference>
<dbReference type="GO" id="GO:0019825">
    <property type="term" value="F:oxygen binding"/>
    <property type="evidence" value="ECO:0007669"/>
    <property type="project" value="InterPro"/>
</dbReference>
<dbReference type="GO" id="GO:0005344">
    <property type="term" value="F:oxygen carrier activity"/>
    <property type="evidence" value="ECO:0007669"/>
    <property type="project" value="UniProtKB-KW"/>
</dbReference>
<dbReference type="GO" id="GO:0004601">
    <property type="term" value="F:peroxidase activity"/>
    <property type="evidence" value="ECO:0007669"/>
    <property type="project" value="TreeGrafter"/>
</dbReference>
<dbReference type="GO" id="GO:0042744">
    <property type="term" value="P:hydrogen peroxide catabolic process"/>
    <property type="evidence" value="ECO:0007669"/>
    <property type="project" value="TreeGrafter"/>
</dbReference>
<dbReference type="CDD" id="cd08927">
    <property type="entry name" value="Hb-alpha-like"/>
    <property type="match status" value="1"/>
</dbReference>
<dbReference type="FunFam" id="1.10.490.10:FF:000002">
    <property type="entry name" value="Hemoglobin subunit alpha"/>
    <property type="match status" value="1"/>
</dbReference>
<dbReference type="Gene3D" id="1.10.490.10">
    <property type="entry name" value="Globins"/>
    <property type="match status" value="1"/>
</dbReference>
<dbReference type="InterPro" id="IPR000971">
    <property type="entry name" value="Globin"/>
</dbReference>
<dbReference type="InterPro" id="IPR009050">
    <property type="entry name" value="Globin-like_sf"/>
</dbReference>
<dbReference type="InterPro" id="IPR012292">
    <property type="entry name" value="Globin/Proto"/>
</dbReference>
<dbReference type="InterPro" id="IPR002338">
    <property type="entry name" value="Hemoglobin_a-typ"/>
</dbReference>
<dbReference type="InterPro" id="IPR050056">
    <property type="entry name" value="Hemoglobin_oxygen_transport"/>
</dbReference>
<dbReference type="PANTHER" id="PTHR11442">
    <property type="entry name" value="HEMOGLOBIN FAMILY MEMBER"/>
    <property type="match status" value="1"/>
</dbReference>
<dbReference type="PANTHER" id="PTHR11442:SF48">
    <property type="entry name" value="HEMOGLOBIN SUBUNIT ALPHA"/>
    <property type="match status" value="1"/>
</dbReference>
<dbReference type="Pfam" id="PF00042">
    <property type="entry name" value="Globin"/>
    <property type="match status" value="1"/>
</dbReference>
<dbReference type="PRINTS" id="PR00612">
    <property type="entry name" value="ALPHAHAEM"/>
</dbReference>
<dbReference type="SUPFAM" id="SSF46458">
    <property type="entry name" value="Globin-like"/>
    <property type="match status" value="1"/>
</dbReference>
<dbReference type="PROSITE" id="PS01033">
    <property type="entry name" value="GLOBIN"/>
    <property type="match status" value="1"/>
</dbReference>
<accession>P02010</accession>
<sequence length="141" mass="15437">VLSEDDKNRVRTSVGKNPELPGEYGSETLTRMFAAHPTTKTYFPHFDLSSGSPNLKAHGKKVIDALDNAVEGLDDAVATLSKLSDLHAQKLRVDPANFKILSQCLLSTLANHRNPEFGPAVLASVDKFLCNVSEVLESKYR</sequence>
<reference key="1">
    <citation type="journal article" date="1974" name="FEBS Lett.">
        <title>Phylogeny of hemoglobins: the complete amino acid sequence of an alpha-chain of viper (Vipera aspis) hemoglobin.</title>
        <authorList>
            <person name="Duguet M."/>
            <person name="Chauvet J.-P."/>
            <person name="Acher R."/>
        </authorList>
    </citation>
    <scope>PROTEIN SEQUENCE</scope>
</reference>
<proteinExistence type="evidence at protein level"/>
<organism>
    <name type="scientific">Vipera aspis</name>
    <name type="common">Aspic viper</name>
    <dbReference type="NCBI Taxonomy" id="8706"/>
    <lineage>
        <taxon>Eukaryota</taxon>
        <taxon>Metazoa</taxon>
        <taxon>Chordata</taxon>
        <taxon>Craniata</taxon>
        <taxon>Vertebrata</taxon>
        <taxon>Euteleostomi</taxon>
        <taxon>Lepidosauria</taxon>
        <taxon>Squamata</taxon>
        <taxon>Bifurcata</taxon>
        <taxon>Unidentata</taxon>
        <taxon>Episquamata</taxon>
        <taxon>Toxicofera</taxon>
        <taxon>Serpentes</taxon>
        <taxon>Colubroidea</taxon>
        <taxon>Viperidae</taxon>
        <taxon>Viperinae</taxon>
        <taxon>Vipera</taxon>
    </lineage>
</organism>
<protein>
    <recommendedName>
        <fullName>Hemoglobin subunit alpha</fullName>
    </recommendedName>
    <alternativeName>
        <fullName>Alpha-globin</fullName>
    </alternativeName>
    <alternativeName>
        <fullName>Hemoglobin alpha chain</fullName>
    </alternativeName>
</protein>
<keyword id="KW-0903">Direct protein sequencing</keyword>
<keyword id="KW-0349">Heme</keyword>
<keyword id="KW-0408">Iron</keyword>
<keyword id="KW-0479">Metal-binding</keyword>
<keyword id="KW-0561">Oxygen transport</keyword>
<keyword id="KW-0813">Transport</keyword>
<gene>
    <name type="primary">HBA</name>
</gene>
<name>HBA_VIPAS</name>
<feature type="chain" id="PRO_0000052802" description="Hemoglobin subunit alpha">
    <location>
        <begin position="1"/>
        <end position="141"/>
    </location>
</feature>
<feature type="domain" description="Globin" evidence="1">
    <location>
        <begin position="1"/>
        <end position="141"/>
    </location>
</feature>
<feature type="region of interest" description="Disordered" evidence="2">
    <location>
        <begin position="1"/>
        <end position="22"/>
    </location>
</feature>
<feature type="binding site" evidence="1">
    <location>
        <position position="58"/>
    </location>
    <ligand>
        <name>O2</name>
        <dbReference type="ChEBI" id="CHEBI:15379"/>
    </ligand>
</feature>
<feature type="binding site" description="proximal binding residue" evidence="1">
    <location>
        <position position="87"/>
    </location>
    <ligand>
        <name>heme b</name>
        <dbReference type="ChEBI" id="CHEBI:60344"/>
    </ligand>
    <ligandPart>
        <name>Fe</name>
        <dbReference type="ChEBI" id="CHEBI:18248"/>
    </ligandPart>
</feature>
<evidence type="ECO:0000255" key="1">
    <source>
        <dbReference type="PROSITE-ProRule" id="PRU00238"/>
    </source>
</evidence>
<evidence type="ECO:0000256" key="2">
    <source>
        <dbReference type="SAM" id="MobiDB-lite"/>
    </source>
</evidence>
<comment type="function">
    <text>Involved in oxygen transport from the lung to the various peripheral tissues.</text>
</comment>
<comment type="subunit">
    <text>Heterotetramer of two alpha chains and two beta chains.</text>
</comment>
<comment type="tissue specificity">
    <text>Red blood cells.</text>
</comment>
<comment type="miscellaneous">
    <text>This is one of two types of alpha chains found in viper hemoglobin.</text>
</comment>
<comment type="similarity">
    <text evidence="1">Belongs to the globin family.</text>
</comment>